<sequence>MSTMTPAEIVSELDKHIIGQDKAKKAVAVALRNRWRRQQVAEPLRQEITPKNILMIGPTGVGKTEIARRLAKLADAPFIKIEATKFTEVGYVGRDVDSIVRDLIEISVKQTRETEMRKVRSKATDLAEDRILDVLLPQPRAVGFGASVEHANDDNNATRQTFRKRLREGQLDDKEIELDIEQPTVGMDIMAPPGMEEMTEQIRSMFSNLGSGKKQRRKVKIKEALKLLTDEEAAKMLNDEEVKTKAVQNVEQNGIVFLDEIDKITSRNHEGGGGEVSRQGVQRDLLPLVEGTTINTKYGMVKTDHILFIASGAFHLAKPSDLIPELQGRFPIRVELDSLSVKDFEAILVATDASLVKQYQALLATEDVALEFADDGIRRLAEIAYAVNEKTENIGARRLYTVIEKLLEEVSFAAGNHAGQSVTIDAAYVDRALGEVSKDEDLSRYVL</sequence>
<feature type="chain" id="PRO_1000012721" description="ATP-dependent protease ATPase subunit HslU">
    <location>
        <begin position="1"/>
        <end position="447"/>
    </location>
</feature>
<feature type="binding site" evidence="1">
    <location>
        <position position="18"/>
    </location>
    <ligand>
        <name>ATP</name>
        <dbReference type="ChEBI" id="CHEBI:30616"/>
    </ligand>
</feature>
<feature type="binding site" evidence="1">
    <location>
        <begin position="60"/>
        <end position="65"/>
    </location>
    <ligand>
        <name>ATP</name>
        <dbReference type="ChEBI" id="CHEBI:30616"/>
    </ligand>
</feature>
<feature type="binding site" evidence="1">
    <location>
        <position position="259"/>
    </location>
    <ligand>
        <name>ATP</name>
        <dbReference type="ChEBI" id="CHEBI:30616"/>
    </ligand>
</feature>
<feature type="binding site" evidence="1">
    <location>
        <position position="325"/>
    </location>
    <ligand>
        <name>ATP</name>
        <dbReference type="ChEBI" id="CHEBI:30616"/>
    </ligand>
</feature>
<feature type="binding site" evidence="1">
    <location>
        <position position="397"/>
    </location>
    <ligand>
        <name>ATP</name>
        <dbReference type="ChEBI" id="CHEBI:30616"/>
    </ligand>
</feature>
<reference key="1">
    <citation type="journal article" date="2005" name="BMC Genomics">
        <title>Bacterial genome adaptation to niches: divergence of the potential virulence genes in three Burkholderia species of different survival strategies.</title>
        <authorList>
            <person name="Kim H.S."/>
            <person name="Schell M.A."/>
            <person name="Yu Y."/>
            <person name="Ulrich R.L."/>
            <person name="Sarria S.H."/>
            <person name="Nierman W.C."/>
            <person name="DeShazer D."/>
        </authorList>
    </citation>
    <scope>NUCLEOTIDE SEQUENCE [LARGE SCALE GENOMIC DNA]</scope>
    <source>
        <strain>ATCC 700388 / DSM 13276 / CCUG 48851 / CIP 106301 / E264</strain>
    </source>
</reference>
<keyword id="KW-0067">ATP-binding</keyword>
<keyword id="KW-0143">Chaperone</keyword>
<keyword id="KW-0963">Cytoplasm</keyword>
<keyword id="KW-0547">Nucleotide-binding</keyword>
<keyword id="KW-0346">Stress response</keyword>
<proteinExistence type="inferred from homology"/>
<dbReference type="EMBL" id="CP000086">
    <property type="protein sequence ID" value="ABC38922.1"/>
    <property type="molecule type" value="Genomic_DNA"/>
</dbReference>
<dbReference type="RefSeq" id="WP_009902157.1">
    <property type="nucleotide sequence ID" value="NZ_CP008785.1"/>
</dbReference>
<dbReference type="SMR" id="Q2T277"/>
<dbReference type="GeneID" id="45119936"/>
<dbReference type="KEGG" id="bte:BTH_I0164"/>
<dbReference type="HOGENOM" id="CLU_033123_0_0_4"/>
<dbReference type="Proteomes" id="UP000001930">
    <property type="component" value="Chromosome I"/>
</dbReference>
<dbReference type="GO" id="GO:0009376">
    <property type="term" value="C:HslUV protease complex"/>
    <property type="evidence" value="ECO:0007669"/>
    <property type="project" value="UniProtKB-UniRule"/>
</dbReference>
<dbReference type="GO" id="GO:0005524">
    <property type="term" value="F:ATP binding"/>
    <property type="evidence" value="ECO:0007669"/>
    <property type="project" value="UniProtKB-UniRule"/>
</dbReference>
<dbReference type="GO" id="GO:0016887">
    <property type="term" value="F:ATP hydrolysis activity"/>
    <property type="evidence" value="ECO:0007669"/>
    <property type="project" value="InterPro"/>
</dbReference>
<dbReference type="GO" id="GO:0008233">
    <property type="term" value="F:peptidase activity"/>
    <property type="evidence" value="ECO:0007669"/>
    <property type="project" value="InterPro"/>
</dbReference>
<dbReference type="GO" id="GO:0036402">
    <property type="term" value="F:proteasome-activating activity"/>
    <property type="evidence" value="ECO:0007669"/>
    <property type="project" value="UniProtKB-UniRule"/>
</dbReference>
<dbReference type="GO" id="GO:0043335">
    <property type="term" value="P:protein unfolding"/>
    <property type="evidence" value="ECO:0007669"/>
    <property type="project" value="UniProtKB-UniRule"/>
</dbReference>
<dbReference type="GO" id="GO:0051603">
    <property type="term" value="P:proteolysis involved in protein catabolic process"/>
    <property type="evidence" value="ECO:0007669"/>
    <property type="project" value="TreeGrafter"/>
</dbReference>
<dbReference type="CDD" id="cd19498">
    <property type="entry name" value="RecA-like_HslU"/>
    <property type="match status" value="1"/>
</dbReference>
<dbReference type="FunFam" id="3.40.50.300:FF:000213">
    <property type="entry name" value="ATP-dependent protease ATPase subunit HslU"/>
    <property type="match status" value="1"/>
</dbReference>
<dbReference type="FunFam" id="3.40.50.300:FF:000220">
    <property type="entry name" value="ATP-dependent protease ATPase subunit HslU"/>
    <property type="match status" value="1"/>
</dbReference>
<dbReference type="Gene3D" id="1.10.8.60">
    <property type="match status" value="1"/>
</dbReference>
<dbReference type="Gene3D" id="3.40.50.300">
    <property type="entry name" value="P-loop containing nucleotide triphosphate hydrolases"/>
    <property type="match status" value="2"/>
</dbReference>
<dbReference type="HAMAP" id="MF_00249">
    <property type="entry name" value="HslU"/>
    <property type="match status" value="1"/>
</dbReference>
<dbReference type="InterPro" id="IPR003593">
    <property type="entry name" value="AAA+_ATPase"/>
</dbReference>
<dbReference type="InterPro" id="IPR050052">
    <property type="entry name" value="ATP-dep_Clp_protease_ClpX"/>
</dbReference>
<dbReference type="InterPro" id="IPR003959">
    <property type="entry name" value="ATPase_AAA_core"/>
</dbReference>
<dbReference type="InterPro" id="IPR019489">
    <property type="entry name" value="Clp_ATPase_C"/>
</dbReference>
<dbReference type="InterPro" id="IPR004491">
    <property type="entry name" value="HslU"/>
</dbReference>
<dbReference type="InterPro" id="IPR027417">
    <property type="entry name" value="P-loop_NTPase"/>
</dbReference>
<dbReference type="NCBIfam" id="TIGR00390">
    <property type="entry name" value="hslU"/>
    <property type="match status" value="1"/>
</dbReference>
<dbReference type="NCBIfam" id="NF003544">
    <property type="entry name" value="PRK05201.1"/>
    <property type="match status" value="1"/>
</dbReference>
<dbReference type="PANTHER" id="PTHR48102">
    <property type="entry name" value="ATP-DEPENDENT CLP PROTEASE ATP-BINDING SUBUNIT CLPX-LIKE, MITOCHONDRIAL-RELATED"/>
    <property type="match status" value="1"/>
</dbReference>
<dbReference type="PANTHER" id="PTHR48102:SF3">
    <property type="entry name" value="ATP-DEPENDENT PROTEASE ATPASE SUBUNIT HSLU"/>
    <property type="match status" value="1"/>
</dbReference>
<dbReference type="Pfam" id="PF00004">
    <property type="entry name" value="AAA"/>
    <property type="match status" value="1"/>
</dbReference>
<dbReference type="Pfam" id="PF07724">
    <property type="entry name" value="AAA_2"/>
    <property type="match status" value="1"/>
</dbReference>
<dbReference type="SMART" id="SM00382">
    <property type="entry name" value="AAA"/>
    <property type="match status" value="1"/>
</dbReference>
<dbReference type="SMART" id="SM01086">
    <property type="entry name" value="ClpB_D2-small"/>
    <property type="match status" value="1"/>
</dbReference>
<dbReference type="SUPFAM" id="SSF52540">
    <property type="entry name" value="P-loop containing nucleoside triphosphate hydrolases"/>
    <property type="match status" value="1"/>
</dbReference>
<name>HSLU_BURTA</name>
<organism>
    <name type="scientific">Burkholderia thailandensis (strain ATCC 700388 / DSM 13276 / CCUG 48851 / CIP 106301 / E264)</name>
    <dbReference type="NCBI Taxonomy" id="271848"/>
    <lineage>
        <taxon>Bacteria</taxon>
        <taxon>Pseudomonadati</taxon>
        <taxon>Pseudomonadota</taxon>
        <taxon>Betaproteobacteria</taxon>
        <taxon>Burkholderiales</taxon>
        <taxon>Burkholderiaceae</taxon>
        <taxon>Burkholderia</taxon>
        <taxon>pseudomallei group</taxon>
    </lineage>
</organism>
<gene>
    <name evidence="1" type="primary">hslU</name>
    <name type="ordered locus">BTH_I0164</name>
</gene>
<protein>
    <recommendedName>
        <fullName evidence="1">ATP-dependent protease ATPase subunit HslU</fullName>
    </recommendedName>
    <alternativeName>
        <fullName evidence="1">Unfoldase HslU</fullName>
    </alternativeName>
</protein>
<accession>Q2T277</accession>
<comment type="function">
    <text evidence="1">ATPase subunit of a proteasome-like degradation complex; this subunit has chaperone activity. The binding of ATP and its subsequent hydrolysis by HslU are essential for unfolding of protein substrates subsequently hydrolyzed by HslV. HslU recognizes the N-terminal part of its protein substrates and unfolds these before they are guided to HslV for hydrolysis.</text>
</comment>
<comment type="subunit">
    <text evidence="1">A double ring-shaped homohexamer of HslV is capped on each side by a ring-shaped HslU homohexamer. The assembly of the HslU/HslV complex is dependent on binding of ATP.</text>
</comment>
<comment type="subcellular location">
    <subcellularLocation>
        <location evidence="1">Cytoplasm</location>
    </subcellularLocation>
</comment>
<comment type="similarity">
    <text evidence="1">Belongs to the ClpX chaperone family. HslU subfamily.</text>
</comment>
<evidence type="ECO:0000255" key="1">
    <source>
        <dbReference type="HAMAP-Rule" id="MF_00249"/>
    </source>
</evidence>